<name>GLNE_PSEPK</name>
<organism>
    <name type="scientific">Pseudomonas putida (strain ATCC 47054 / DSM 6125 / CFBP 8728 / NCIMB 11950 / KT2440)</name>
    <dbReference type="NCBI Taxonomy" id="160488"/>
    <lineage>
        <taxon>Bacteria</taxon>
        <taxon>Pseudomonadati</taxon>
        <taxon>Pseudomonadota</taxon>
        <taxon>Gammaproteobacteria</taxon>
        <taxon>Pseudomonadales</taxon>
        <taxon>Pseudomonadaceae</taxon>
        <taxon>Pseudomonas</taxon>
    </lineage>
</organism>
<comment type="function">
    <text evidence="1">Involved in the regulation of glutamine synthetase GlnA, a key enzyme in the process to assimilate ammonia. When cellular nitrogen levels are high, the C-terminal adenylyl transferase (AT) inactivates GlnA by covalent transfer of an adenylyl group from ATP to specific tyrosine residue of GlnA, thus reducing its activity. Conversely, when nitrogen levels are low, the N-terminal adenylyl removase (AR) activates GlnA by removing the adenylyl group by phosphorolysis, increasing its activity. The regulatory region of GlnE binds the signal transduction protein PII (GlnB) which indicates the nitrogen status of the cell.</text>
</comment>
<comment type="catalytic activity">
    <reaction evidence="1">
        <text>[glutamine synthetase]-O(4)-(5'-adenylyl)-L-tyrosine + phosphate = [glutamine synthetase]-L-tyrosine + ADP</text>
        <dbReference type="Rhea" id="RHEA:43716"/>
        <dbReference type="Rhea" id="RHEA-COMP:10660"/>
        <dbReference type="Rhea" id="RHEA-COMP:10661"/>
        <dbReference type="ChEBI" id="CHEBI:43474"/>
        <dbReference type="ChEBI" id="CHEBI:46858"/>
        <dbReference type="ChEBI" id="CHEBI:83624"/>
        <dbReference type="ChEBI" id="CHEBI:456216"/>
        <dbReference type="EC" id="2.7.7.89"/>
    </reaction>
</comment>
<comment type="catalytic activity">
    <reaction evidence="1">
        <text>[glutamine synthetase]-L-tyrosine + ATP = [glutamine synthetase]-O(4)-(5'-adenylyl)-L-tyrosine + diphosphate</text>
        <dbReference type="Rhea" id="RHEA:18589"/>
        <dbReference type="Rhea" id="RHEA-COMP:10660"/>
        <dbReference type="Rhea" id="RHEA-COMP:10661"/>
        <dbReference type="ChEBI" id="CHEBI:30616"/>
        <dbReference type="ChEBI" id="CHEBI:33019"/>
        <dbReference type="ChEBI" id="CHEBI:46858"/>
        <dbReference type="ChEBI" id="CHEBI:83624"/>
        <dbReference type="EC" id="2.7.7.42"/>
    </reaction>
</comment>
<comment type="cofactor">
    <cofactor evidence="1">
        <name>Mg(2+)</name>
        <dbReference type="ChEBI" id="CHEBI:18420"/>
    </cofactor>
</comment>
<comment type="similarity">
    <text evidence="1">Belongs to the GlnE family.</text>
</comment>
<reference key="1">
    <citation type="journal article" date="2002" name="Environ. Microbiol.">
        <title>Complete genome sequence and comparative analysis of the metabolically versatile Pseudomonas putida KT2440.</title>
        <authorList>
            <person name="Nelson K.E."/>
            <person name="Weinel C."/>
            <person name="Paulsen I.T."/>
            <person name="Dodson R.J."/>
            <person name="Hilbert H."/>
            <person name="Martins dos Santos V.A.P."/>
            <person name="Fouts D.E."/>
            <person name="Gill S.R."/>
            <person name="Pop M."/>
            <person name="Holmes M."/>
            <person name="Brinkac L.M."/>
            <person name="Beanan M.J."/>
            <person name="DeBoy R.T."/>
            <person name="Daugherty S.C."/>
            <person name="Kolonay J.F."/>
            <person name="Madupu R."/>
            <person name="Nelson W.C."/>
            <person name="White O."/>
            <person name="Peterson J.D."/>
            <person name="Khouri H.M."/>
            <person name="Hance I."/>
            <person name="Chris Lee P."/>
            <person name="Holtzapple E.K."/>
            <person name="Scanlan D."/>
            <person name="Tran K."/>
            <person name="Moazzez A."/>
            <person name="Utterback T.R."/>
            <person name="Rizzo M."/>
            <person name="Lee K."/>
            <person name="Kosack D."/>
            <person name="Moestl D."/>
            <person name="Wedler H."/>
            <person name="Lauber J."/>
            <person name="Stjepandic D."/>
            <person name="Hoheisel J."/>
            <person name="Straetz M."/>
            <person name="Heim S."/>
            <person name="Kiewitz C."/>
            <person name="Eisen J.A."/>
            <person name="Timmis K.N."/>
            <person name="Duesterhoeft A."/>
            <person name="Tuemmler B."/>
            <person name="Fraser C.M."/>
        </authorList>
    </citation>
    <scope>NUCLEOTIDE SEQUENCE [LARGE SCALE GENOMIC DNA]</scope>
    <source>
        <strain>ATCC 47054 / DSM 6125 / CFBP 8728 / NCIMB 11950 / KT2440</strain>
    </source>
</reference>
<protein>
    <recommendedName>
        <fullName evidence="1">Bifunctional glutamine synthetase adenylyltransferase/adenylyl-removing enzyme</fullName>
    </recommendedName>
    <alternativeName>
        <fullName evidence="1">ATP:glutamine synthetase adenylyltransferase</fullName>
    </alternativeName>
    <alternativeName>
        <fullName evidence="1">ATase</fullName>
    </alternativeName>
    <domain>
        <recommendedName>
            <fullName evidence="1">Glutamine synthetase adenylyl-L-tyrosine phosphorylase</fullName>
            <ecNumber evidence="1">2.7.7.89</ecNumber>
        </recommendedName>
        <alternativeName>
            <fullName evidence="1">Adenylyl removase</fullName>
            <shortName evidence="1">AR</shortName>
            <shortName evidence="1">AT-N</shortName>
        </alternativeName>
    </domain>
    <domain>
        <recommendedName>
            <fullName evidence="1">Glutamine synthetase adenylyl transferase</fullName>
            <ecNumber evidence="1">2.7.7.42</ecNumber>
        </recommendedName>
        <alternativeName>
            <fullName evidence="1">Adenylyl transferase</fullName>
            <shortName evidence="1">AT</shortName>
            <shortName evidence="1">AT-C</shortName>
        </alternativeName>
    </domain>
</protein>
<keyword id="KW-0067">ATP-binding</keyword>
<keyword id="KW-0460">Magnesium</keyword>
<keyword id="KW-0511">Multifunctional enzyme</keyword>
<keyword id="KW-0547">Nucleotide-binding</keyword>
<keyword id="KW-0548">Nucleotidyltransferase</keyword>
<keyword id="KW-1185">Reference proteome</keyword>
<keyword id="KW-0808">Transferase</keyword>
<gene>
    <name evidence="1" type="primary">glnE</name>
    <name type="ordered locus">PP_0340</name>
</gene>
<feature type="chain" id="PRO_0000209268" description="Bifunctional glutamine synthetase adenylyltransferase/adenylyl-removing enzyme">
    <location>
        <begin position="1"/>
        <end position="977"/>
    </location>
</feature>
<feature type="region of interest" description="Adenylyl removase" evidence="1">
    <location>
        <begin position="1"/>
        <end position="457"/>
    </location>
</feature>
<feature type="region of interest" description="Adenylyl transferase" evidence="1">
    <location>
        <begin position="468"/>
        <end position="977"/>
    </location>
</feature>
<sequence>MRLPLPSDLPATLQPLVTRNQQFISDAVAGHPELDLQAWSPLHRQQFDQVAAASEFVLSLAQREPAMLFALLASGELERRYAPGELRGQIAATAQAAQSEDELARNLRRARNRQQLRIIWRDITRQAELGETCRDLSDLADAAIDEAYQWLYPRHCQQFGTPIGNRSGQPQHMVVLGMGKLGAVELNLSSDIDLIFGFPEGGETEGVKRSLDNQEFFTRLGQRLIKALDPVTVDGFVFRVDMRLRPYGSAGALVLSFNALEQYYQDQGRDWERYAMIKARVVAGDQAAGAQLQEMLRPFVYRRYLDFSAIEALRTMKQLIQQEVRRKGMAENIKLGAGGIREVEFIAQAFQLIHGGRDLSLQQRPLLKVLATLEGQGYLPPAVVAELREGYEFLRYTEHAIQAIADRQTQMLPEGETDQARVAYVLGFADWQSFHDQLMYWRGRIDWHFRQVIADPDDEDGEGELVVGGEWSPLWEQAQDEEAAGRQLQEAGFKQPAEALRRLAGLRSSPQLRSMQRIGRERLDAFIPRLLAQAVEHDNPDLVLERVLPLVEAVARRSAYLVLLTENPGALRRLLTLCAASPWIAEQIALYPLLLDELLNEGRLFSPPLAPELASELRERLTRIPEDDLEQQMEALRHFKLAHSLRVAASEISGNLPLMKVSDYLTWLAEAILDQVLALAWRQTVARHGQPKRSDGSLCDPGFIIIGYGKMGGLELGHGSDLDLVFIHDGDPQAETDGAKPIDSAQFFTRLGQRIIHLLTTQTNSGQLYDVDMRLRPSGASGLLVSSLGAFERYQQNEAWTWEHQALVRARVLVGCKQVGAAFEGVRAKVLGQARDLEKLRGEVSEMRAKMRDNLGTKATAAGTAANAFDAGVPFDIKQDAGGIVDIEFMVQYAALAWSHDHPAILRWTDNIRILEELEQANLMPASDAVLLREVYKAFRSASHRQALQKEAGVIDAAQFADERREVRRIWGELGLS</sequence>
<accession>Q88QZ4</accession>
<dbReference type="EC" id="2.7.7.89" evidence="1"/>
<dbReference type="EC" id="2.7.7.42" evidence="1"/>
<dbReference type="EMBL" id="AE015451">
    <property type="protein sequence ID" value="AAN65971.1"/>
    <property type="molecule type" value="Genomic_DNA"/>
</dbReference>
<dbReference type="RefSeq" id="NP_742507.1">
    <property type="nucleotide sequence ID" value="NC_002947.4"/>
</dbReference>
<dbReference type="RefSeq" id="WP_010951694.1">
    <property type="nucleotide sequence ID" value="NZ_CP169744.1"/>
</dbReference>
<dbReference type="SMR" id="Q88QZ4"/>
<dbReference type="STRING" id="160488.PP_0340"/>
<dbReference type="PaxDb" id="160488-PP_0340"/>
<dbReference type="GeneID" id="83677615"/>
<dbReference type="KEGG" id="ppu:PP_0340"/>
<dbReference type="PATRIC" id="fig|160488.4.peg.367"/>
<dbReference type="eggNOG" id="COG1391">
    <property type="taxonomic scope" value="Bacteria"/>
</dbReference>
<dbReference type="HOGENOM" id="CLU_006233_0_1_6"/>
<dbReference type="OrthoDB" id="9759366at2"/>
<dbReference type="PhylomeDB" id="Q88QZ4"/>
<dbReference type="BioCyc" id="PPUT160488:G1G01-373-MONOMER"/>
<dbReference type="Proteomes" id="UP000000556">
    <property type="component" value="Chromosome"/>
</dbReference>
<dbReference type="GO" id="GO:0005829">
    <property type="term" value="C:cytosol"/>
    <property type="evidence" value="ECO:0007669"/>
    <property type="project" value="TreeGrafter"/>
</dbReference>
<dbReference type="GO" id="GO:0008882">
    <property type="term" value="F:[glutamate-ammonia-ligase] adenylyltransferase activity"/>
    <property type="evidence" value="ECO:0007669"/>
    <property type="project" value="UniProtKB-UniRule"/>
</dbReference>
<dbReference type="GO" id="GO:0047388">
    <property type="term" value="F:[glutamine synthetase]-adenylyl-L-tyrosine phosphorylase activity"/>
    <property type="evidence" value="ECO:0007669"/>
    <property type="project" value="UniProtKB-EC"/>
</dbReference>
<dbReference type="GO" id="GO:0005524">
    <property type="term" value="F:ATP binding"/>
    <property type="evidence" value="ECO:0007669"/>
    <property type="project" value="UniProtKB-UniRule"/>
</dbReference>
<dbReference type="GO" id="GO:0000287">
    <property type="term" value="F:magnesium ion binding"/>
    <property type="evidence" value="ECO:0007669"/>
    <property type="project" value="UniProtKB-UniRule"/>
</dbReference>
<dbReference type="GO" id="GO:0000820">
    <property type="term" value="P:regulation of glutamine family amino acid metabolic process"/>
    <property type="evidence" value="ECO:0007669"/>
    <property type="project" value="UniProtKB-UniRule"/>
</dbReference>
<dbReference type="CDD" id="cd05401">
    <property type="entry name" value="NT_GlnE_GlnD_like"/>
    <property type="match status" value="2"/>
</dbReference>
<dbReference type="FunFam" id="1.20.120.330:FF:000005">
    <property type="entry name" value="Bifunctional glutamine synthetase adenylyltransferase/adenylyl-removing enzyme"/>
    <property type="match status" value="1"/>
</dbReference>
<dbReference type="FunFam" id="3.30.460.10:FF:000009">
    <property type="entry name" value="Bifunctional glutamine synthetase adenylyltransferase/adenylyl-removing enzyme"/>
    <property type="match status" value="2"/>
</dbReference>
<dbReference type="Gene3D" id="1.20.120.1510">
    <property type="match status" value="1"/>
</dbReference>
<dbReference type="Gene3D" id="3.30.460.10">
    <property type="entry name" value="Beta Polymerase, domain 2"/>
    <property type="match status" value="2"/>
</dbReference>
<dbReference type="Gene3D" id="1.20.120.330">
    <property type="entry name" value="Nucleotidyltransferases domain 2"/>
    <property type="match status" value="2"/>
</dbReference>
<dbReference type="HAMAP" id="MF_00802">
    <property type="entry name" value="GlnE"/>
    <property type="match status" value="1"/>
</dbReference>
<dbReference type="InterPro" id="IPR023057">
    <property type="entry name" value="GlnE"/>
</dbReference>
<dbReference type="InterPro" id="IPR005190">
    <property type="entry name" value="GlnE_rpt_dom"/>
</dbReference>
<dbReference type="InterPro" id="IPR043519">
    <property type="entry name" value="NT_sf"/>
</dbReference>
<dbReference type="InterPro" id="IPR013546">
    <property type="entry name" value="PII_UdlTrfase/GS_AdlTrfase"/>
</dbReference>
<dbReference type="NCBIfam" id="NF008292">
    <property type="entry name" value="PRK11072.1"/>
    <property type="match status" value="1"/>
</dbReference>
<dbReference type="PANTHER" id="PTHR30621:SF0">
    <property type="entry name" value="BIFUNCTIONAL GLUTAMINE SYNTHETASE ADENYLYLTRANSFERASE_ADENYLYL-REMOVING ENZYME"/>
    <property type="match status" value="1"/>
</dbReference>
<dbReference type="PANTHER" id="PTHR30621">
    <property type="entry name" value="GLUTAMINE SYNTHETASE ADENYLYLTRANSFERASE"/>
    <property type="match status" value="1"/>
</dbReference>
<dbReference type="Pfam" id="PF08335">
    <property type="entry name" value="GlnD_UR_UTase"/>
    <property type="match status" value="2"/>
</dbReference>
<dbReference type="Pfam" id="PF03710">
    <property type="entry name" value="GlnE"/>
    <property type="match status" value="2"/>
</dbReference>
<dbReference type="SUPFAM" id="SSF81301">
    <property type="entry name" value="Nucleotidyltransferase"/>
    <property type="match status" value="2"/>
</dbReference>
<dbReference type="SUPFAM" id="SSF81593">
    <property type="entry name" value="Nucleotidyltransferase substrate binding subunit/domain"/>
    <property type="match status" value="2"/>
</dbReference>
<proteinExistence type="inferred from homology"/>
<evidence type="ECO:0000255" key="1">
    <source>
        <dbReference type="HAMAP-Rule" id="MF_00802"/>
    </source>
</evidence>